<evidence type="ECO:0000255" key="1">
    <source>
        <dbReference type="HAMAP-Rule" id="MF_01341"/>
    </source>
</evidence>
<evidence type="ECO:0000256" key="2">
    <source>
        <dbReference type="SAM" id="MobiDB-lite"/>
    </source>
</evidence>
<evidence type="ECO:0000305" key="3"/>
<protein>
    <recommendedName>
        <fullName evidence="1">Large ribosomal subunit protein uL15</fullName>
    </recommendedName>
    <alternativeName>
        <fullName evidence="3">50S ribosomal protein L15</fullName>
    </alternativeName>
</protein>
<keyword id="KW-0687">Ribonucleoprotein</keyword>
<keyword id="KW-0689">Ribosomal protein</keyword>
<keyword id="KW-0694">RNA-binding</keyword>
<keyword id="KW-0699">rRNA-binding</keyword>
<gene>
    <name evidence="1" type="primary">rplO</name>
    <name type="ordered locus">CLM_3929</name>
</gene>
<dbReference type="EMBL" id="CP001581">
    <property type="protein sequence ID" value="ACO86409.1"/>
    <property type="molecule type" value="Genomic_DNA"/>
</dbReference>
<dbReference type="RefSeq" id="WP_003357513.1">
    <property type="nucleotide sequence ID" value="NC_012563.1"/>
</dbReference>
<dbReference type="SMR" id="C1FMT2"/>
<dbReference type="GeneID" id="92940231"/>
<dbReference type="KEGG" id="cby:CLM_3929"/>
<dbReference type="eggNOG" id="COG0200">
    <property type="taxonomic scope" value="Bacteria"/>
</dbReference>
<dbReference type="HOGENOM" id="CLU_055188_4_2_9"/>
<dbReference type="Proteomes" id="UP000001374">
    <property type="component" value="Chromosome"/>
</dbReference>
<dbReference type="GO" id="GO:0022625">
    <property type="term" value="C:cytosolic large ribosomal subunit"/>
    <property type="evidence" value="ECO:0007669"/>
    <property type="project" value="TreeGrafter"/>
</dbReference>
<dbReference type="GO" id="GO:0019843">
    <property type="term" value="F:rRNA binding"/>
    <property type="evidence" value="ECO:0007669"/>
    <property type="project" value="UniProtKB-UniRule"/>
</dbReference>
<dbReference type="GO" id="GO:0003735">
    <property type="term" value="F:structural constituent of ribosome"/>
    <property type="evidence" value="ECO:0007669"/>
    <property type="project" value="InterPro"/>
</dbReference>
<dbReference type="GO" id="GO:0006412">
    <property type="term" value="P:translation"/>
    <property type="evidence" value="ECO:0007669"/>
    <property type="project" value="UniProtKB-UniRule"/>
</dbReference>
<dbReference type="Gene3D" id="3.100.10.10">
    <property type="match status" value="1"/>
</dbReference>
<dbReference type="HAMAP" id="MF_01341">
    <property type="entry name" value="Ribosomal_uL15"/>
    <property type="match status" value="1"/>
</dbReference>
<dbReference type="InterPro" id="IPR030878">
    <property type="entry name" value="Ribosomal_uL15"/>
</dbReference>
<dbReference type="InterPro" id="IPR021131">
    <property type="entry name" value="Ribosomal_uL15/eL18"/>
</dbReference>
<dbReference type="InterPro" id="IPR036227">
    <property type="entry name" value="Ribosomal_uL15/eL18_sf"/>
</dbReference>
<dbReference type="InterPro" id="IPR005749">
    <property type="entry name" value="Ribosomal_uL15_bac-type"/>
</dbReference>
<dbReference type="InterPro" id="IPR001196">
    <property type="entry name" value="Ribosomal_uL15_CS"/>
</dbReference>
<dbReference type="NCBIfam" id="TIGR01071">
    <property type="entry name" value="rplO_bact"/>
    <property type="match status" value="1"/>
</dbReference>
<dbReference type="PANTHER" id="PTHR12934">
    <property type="entry name" value="50S RIBOSOMAL PROTEIN L15"/>
    <property type="match status" value="1"/>
</dbReference>
<dbReference type="PANTHER" id="PTHR12934:SF11">
    <property type="entry name" value="LARGE RIBOSOMAL SUBUNIT PROTEIN UL15M"/>
    <property type="match status" value="1"/>
</dbReference>
<dbReference type="Pfam" id="PF00828">
    <property type="entry name" value="Ribosomal_L27A"/>
    <property type="match status" value="1"/>
</dbReference>
<dbReference type="SUPFAM" id="SSF52080">
    <property type="entry name" value="Ribosomal proteins L15p and L18e"/>
    <property type="match status" value="1"/>
</dbReference>
<dbReference type="PROSITE" id="PS00475">
    <property type="entry name" value="RIBOSOMAL_L15"/>
    <property type="match status" value="1"/>
</dbReference>
<feature type="chain" id="PRO_1000166284" description="Large ribosomal subunit protein uL15">
    <location>
        <begin position="1"/>
        <end position="146"/>
    </location>
</feature>
<feature type="region of interest" description="Disordered" evidence="2">
    <location>
        <begin position="1"/>
        <end position="56"/>
    </location>
</feature>
<feature type="compositionally biased region" description="Gly residues" evidence="2">
    <location>
        <begin position="21"/>
        <end position="35"/>
    </location>
</feature>
<feature type="compositionally biased region" description="Gly residues" evidence="2">
    <location>
        <begin position="42"/>
        <end position="52"/>
    </location>
</feature>
<proteinExistence type="inferred from homology"/>
<name>RL15_CLOBJ</name>
<accession>C1FMT2</accession>
<comment type="function">
    <text evidence="1">Binds to the 23S rRNA.</text>
</comment>
<comment type="subunit">
    <text evidence="1">Part of the 50S ribosomal subunit.</text>
</comment>
<comment type="similarity">
    <text evidence="1">Belongs to the universal ribosomal protein uL15 family.</text>
</comment>
<reference key="1">
    <citation type="submission" date="2008-10" db="EMBL/GenBank/DDBJ databases">
        <title>Genome sequence of Clostridium botulinum A2 Kyoto.</title>
        <authorList>
            <person name="Shrivastava S."/>
            <person name="Brinkac L.M."/>
            <person name="Brown J.L."/>
            <person name="Bruce D."/>
            <person name="Detter C.C."/>
            <person name="Johnson E.A."/>
            <person name="Munk C.A."/>
            <person name="Smith L.A."/>
            <person name="Smith T.J."/>
            <person name="Sutton G."/>
            <person name="Brettin T.S."/>
        </authorList>
    </citation>
    <scope>NUCLEOTIDE SEQUENCE [LARGE SCALE GENOMIC DNA]</scope>
    <source>
        <strain>Kyoto / Type A2</strain>
    </source>
</reference>
<organism>
    <name type="scientific">Clostridium botulinum (strain Kyoto / Type A2)</name>
    <dbReference type="NCBI Taxonomy" id="536232"/>
    <lineage>
        <taxon>Bacteria</taxon>
        <taxon>Bacillati</taxon>
        <taxon>Bacillota</taxon>
        <taxon>Clostridia</taxon>
        <taxon>Eubacteriales</taxon>
        <taxon>Clostridiaceae</taxon>
        <taxon>Clostridium</taxon>
    </lineage>
</organism>
<sequence>MKLHELKAAEGANKASKRVGRGTGSGLGKTSGRGQNGQNSRSGGGVRPGFEGGQMPLYRRLPKRGFKNIFAKEYAAINLDRLNCFEDGTVVTPELLVEKRVVKKVKDGVKILGNGNIEKKLTVKAAKFSKSAIEKIEAAGGKVEVI</sequence>